<keyword id="KW-0064">Aspartyl protease</keyword>
<keyword id="KW-1003">Cell membrane</keyword>
<keyword id="KW-0378">Hydrolase</keyword>
<keyword id="KW-0472">Membrane</keyword>
<keyword id="KW-0645">Protease</keyword>
<keyword id="KW-1185">Reference proteome</keyword>
<keyword id="KW-0812">Transmembrane</keyword>
<keyword id="KW-1133">Transmembrane helix</keyword>
<gene>
    <name evidence="1" type="primary">lspA</name>
    <name type="synonym">lsp</name>
    <name type="ordered locus">BH2543</name>
</gene>
<dbReference type="EC" id="3.4.23.36" evidence="1"/>
<dbReference type="EMBL" id="BA000004">
    <property type="protein sequence ID" value="BAB06262.1"/>
    <property type="molecule type" value="Genomic_DNA"/>
</dbReference>
<dbReference type="PIR" id="G83967">
    <property type="entry name" value="G83967"/>
</dbReference>
<dbReference type="RefSeq" id="WP_010898694.1">
    <property type="nucleotide sequence ID" value="NC_002570.2"/>
</dbReference>
<dbReference type="SMR" id="Q9K9V2"/>
<dbReference type="STRING" id="272558.gene:10728441"/>
<dbReference type="KEGG" id="bha:BH2543"/>
<dbReference type="eggNOG" id="COG0597">
    <property type="taxonomic scope" value="Bacteria"/>
</dbReference>
<dbReference type="HOGENOM" id="CLU_083252_3_0_9"/>
<dbReference type="OrthoDB" id="9810259at2"/>
<dbReference type="UniPathway" id="UPA00665"/>
<dbReference type="Proteomes" id="UP000001258">
    <property type="component" value="Chromosome"/>
</dbReference>
<dbReference type="GO" id="GO:0005886">
    <property type="term" value="C:plasma membrane"/>
    <property type="evidence" value="ECO:0007669"/>
    <property type="project" value="UniProtKB-SubCell"/>
</dbReference>
<dbReference type="GO" id="GO:0004190">
    <property type="term" value="F:aspartic-type endopeptidase activity"/>
    <property type="evidence" value="ECO:0007669"/>
    <property type="project" value="UniProtKB-UniRule"/>
</dbReference>
<dbReference type="GO" id="GO:0006508">
    <property type="term" value="P:proteolysis"/>
    <property type="evidence" value="ECO:0007669"/>
    <property type="project" value="UniProtKB-KW"/>
</dbReference>
<dbReference type="HAMAP" id="MF_00161">
    <property type="entry name" value="LspA"/>
    <property type="match status" value="1"/>
</dbReference>
<dbReference type="InterPro" id="IPR001872">
    <property type="entry name" value="Peptidase_A8"/>
</dbReference>
<dbReference type="NCBIfam" id="TIGR00077">
    <property type="entry name" value="lspA"/>
    <property type="match status" value="1"/>
</dbReference>
<dbReference type="PANTHER" id="PTHR33695">
    <property type="entry name" value="LIPOPROTEIN SIGNAL PEPTIDASE"/>
    <property type="match status" value="1"/>
</dbReference>
<dbReference type="PANTHER" id="PTHR33695:SF1">
    <property type="entry name" value="LIPOPROTEIN SIGNAL PEPTIDASE"/>
    <property type="match status" value="1"/>
</dbReference>
<dbReference type="Pfam" id="PF01252">
    <property type="entry name" value="Peptidase_A8"/>
    <property type="match status" value="1"/>
</dbReference>
<dbReference type="PRINTS" id="PR00781">
    <property type="entry name" value="LIPOSIGPTASE"/>
</dbReference>
<dbReference type="PROSITE" id="PS00855">
    <property type="entry name" value="SPASE_II"/>
    <property type="match status" value="1"/>
</dbReference>
<sequence length="156" mass="17828">MIYYIVALVIILLDQWTKWLVVRHMEIGESIPLLDSVLYLTSHRNKGAAFGILEGQMWLFYIITSIVVIGIVYYMEKEAKHDRVFATALALILGGAIGNFIDRIFRGEVVDFVNTYIFTYNFPIFNVADSALCVGVGILFLKMIRDERKAKKEKNA</sequence>
<name>LSPA_HALH5</name>
<proteinExistence type="inferred from homology"/>
<evidence type="ECO:0000255" key="1">
    <source>
        <dbReference type="HAMAP-Rule" id="MF_00161"/>
    </source>
</evidence>
<evidence type="ECO:0000305" key="2"/>
<comment type="function">
    <text evidence="1">This protein specifically catalyzes the removal of signal peptides from prolipoproteins.</text>
</comment>
<comment type="catalytic activity">
    <reaction evidence="1">
        <text>Release of signal peptides from bacterial membrane prolipoproteins. Hydrolyzes -Xaa-Yaa-Zaa-|-(S,diacylglyceryl)Cys-, in which Xaa is hydrophobic (preferably Leu), and Yaa (Ala or Ser) and Zaa (Gly or Ala) have small, neutral side chains.</text>
        <dbReference type="EC" id="3.4.23.36"/>
    </reaction>
</comment>
<comment type="pathway">
    <text evidence="1">Protein modification; lipoprotein biosynthesis (signal peptide cleavage).</text>
</comment>
<comment type="subcellular location">
    <subcellularLocation>
        <location evidence="1">Cell membrane</location>
        <topology evidence="1">Multi-pass membrane protein</topology>
    </subcellularLocation>
</comment>
<comment type="similarity">
    <text evidence="1 2">Belongs to the peptidase A8 family.</text>
</comment>
<reference key="1">
    <citation type="journal article" date="2000" name="Nucleic Acids Res.">
        <title>Complete genome sequence of the alkaliphilic bacterium Bacillus halodurans and genomic sequence comparison with Bacillus subtilis.</title>
        <authorList>
            <person name="Takami H."/>
            <person name="Nakasone K."/>
            <person name="Takaki Y."/>
            <person name="Maeno G."/>
            <person name="Sasaki R."/>
            <person name="Masui N."/>
            <person name="Fuji F."/>
            <person name="Hirama C."/>
            <person name="Nakamura Y."/>
            <person name="Ogasawara N."/>
            <person name="Kuhara S."/>
            <person name="Horikoshi K."/>
        </authorList>
    </citation>
    <scope>NUCLEOTIDE SEQUENCE [LARGE SCALE GENOMIC DNA]</scope>
    <source>
        <strain>ATCC BAA-125 / DSM 18197 / FERM 7344 / JCM 9153 / C-125</strain>
    </source>
</reference>
<protein>
    <recommendedName>
        <fullName evidence="1">Lipoprotein signal peptidase</fullName>
        <ecNumber evidence="1">3.4.23.36</ecNumber>
    </recommendedName>
    <alternativeName>
        <fullName evidence="1">Prolipoprotein signal peptidase</fullName>
    </alternativeName>
    <alternativeName>
        <fullName evidence="1">Signal peptidase II</fullName>
        <shortName evidence="1">SPase II</shortName>
    </alternativeName>
</protein>
<organism>
    <name type="scientific">Halalkalibacterium halodurans (strain ATCC BAA-125 / DSM 18197 / FERM 7344 / JCM 9153 / C-125)</name>
    <name type="common">Bacillus halodurans</name>
    <dbReference type="NCBI Taxonomy" id="272558"/>
    <lineage>
        <taxon>Bacteria</taxon>
        <taxon>Bacillati</taxon>
        <taxon>Bacillota</taxon>
        <taxon>Bacilli</taxon>
        <taxon>Bacillales</taxon>
        <taxon>Bacillaceae</taxon>
        <taxon>Halalkalibacterium (ex Joshi et al. 2022)</taxon>
    </lineage>
</organism>
<feature type="chain" id="PRO_0000178768" description="Lipoprotein signal peptidase">
    <location>
        <begin position="1"/>
        <end position="156"/>
    </location>
</feature>
<feature type="transmembrane region" description="Helical" evidence="1">
    <location>
        <begin position="52"/>
        <end position="72"/>
    </location>
</feature>
<feature type="transmembrane region" description="Helical" evidence="1">
    <location>
        <begin position="85"/>
        <end position="105"/>
    </location>
</feature>
<feature type="transmembrane region" description="Helical" evidence="1">
    <location>
        <begin position="121"/>
        <end position="141"/>
    </location>
</feature>
<feature type="active site" evidence="1">
    <location>
        <position position="111"/>
    </location>
</feature>
<feature type="active site" evidence="1">
    <location>
        <position position="129"/>
    </location>
</feature>
<accession>Q9K9V2</accession>